<organism>
    <name type="scientific">Homo sapiens</name>
    <name type="common">Human</name>
    <dbReference type="NCBI Taxonomy" id="9606"/>
    <lineage>
        <taxon>Eukaryota</taxon>
        <taxon>Metazoa</taxon>
        <taxon>Chordata</taxon>
        <taxon>Craniata</taxon>
        <taxon>Vertebrata</taxon>
        <taxon>Euteleostomi</taxon>
        <taxon>Mammalia</taxon>
        <taxon>Eutheria</taxon>
        <taxon>Euarchontoglires</taxon>
        <taxon>Primates</taxon>
        <taxon>Haplorrhini</taxon>
        <taxon>Catarrhini</taxon>
        <taxon>Hominidae</taxon>
        <taxon>Homo</taxon>
    </lineage>
</organism>
<protein>
    <recommendedName>
        <fullName>Ret finger protein-like 4A-like protein 1</fullName>
    </recommendedName>
</protein>
<name>RFAL1_HUMAN</name>
<feature type="chain" id="PRO_0000422543" description="Ret finger protein-like 4A-like protein 1">
    <location>
        <begin position="1"/>
        <end position="287"/>
    </location>
</feature>
<feature type="domain" description="B30.2/SPRY" evidence="2">
    <location>
        <begin position="78"/>
        <end position="276"/>
    </location>
</feature>
<feature type="zinc finger region" description="RING-type; degenerate" evidence="1">
    <location>
        <begin position="11"/>
        <end position="53"/>
    </location>
</feature>
<feature type="sequence conflict" description="In Ref. 2; CA454993." evidence="3" ref="2">
    <original>D</original>
    <variation>N</variation>
    <location>
        <position position="43"/>
    </location>
</feature>
<feature type="sequence conflict" description="In Ref. 2; CA454993." evidence="3" ref="2">
    <original>N</original>
    <variation>Y</variation>
    <location>
        <position position="239"/>
    </location>
</feature>
<keyword id="KW-0479">Metal-binding</keyword>
<keyword id="KW-1185">Reference proteome</keyword>
<keyword id="KW-0862">Zinc</keyword>
<keyword id="KW-0863">Zinc-finger</keyword>
<proteinExistence type="evidence at transcript level"/>
<accession>F8VTS6</accession>
<dbReference type="EMBL" id="AC008749">
    <property type="status" value="NOT_ANNOTATED_CDS"/>
    <property type="molecule type" value="Genomic_DNA"/>
</dbReference>
<dbReference type="EMBL" id="CA454993">
    <property type="status" value="NOT_ANNOTATED_CDS"/>
    <property type="molecule type" value="mRNA"/>
</dbReference>
<dbReference type="CCDS" id="CCDS59425.1"/>
<dbReference type="RefSeq" id="NP_001264326.1">
    <property type="nucleotide sequence ID" value="NM_001277397.2"/>
</dbReference>
<dbReference type="RefSeq" id="XP_011525561.1">
    <property type="nucleotide sequence ID" value="XM_011527259.1"/>
</dbReference>
<dbReference type="SMR" id="F8VTS6"/>
<dbReference type="FunCoup" id="F8VTS6">
    <property type="interactions" value="7"/>
</dbReference>
<dbReference type="STRING" id="9606.ENSP00000345151"/>
<dbReference type="iPTMnet" id="F8VTS6"/>
<dbReference type="PhosphoSitePlus" id="F8VTS6"/>
<dbReference type="BioMuta" id="RFPL4AL1"/>
<dbReference type="MassIVE" id="F8VTS6"/>
<dbReference type="PaxDb" id="9606-ENSP00000345151"/>
<dbReference type="PeptideAtlas" id="F8VTS6"/>
<dbReference type="Pumba" id="F8VTS6"/>
<dbReference type="DNASU" id="729974"/>
<dbReference type="Ensembl" id="ENST00000341750.5">
    <property type="protein sequence ID" value="ENSP00000345151.5"/>
    <property type="gene ID" value="ENSG00000229292.2"/>
</dbReference>
<dbReference type="GeneID" id="729974"/>
<dbReference type="KEGG" id="hsa:729974"/>
<dbReference type="MANE-Select" id="ENST00000341750.5">
    <property type="protein sequence ID" value="ENSP00000345151.5"/>
    <property type="RefSeq nucleotide sequence ID" value="NM_001277397.2"/>
    <property type="RefSeq protein sequence ID" value="NP_001264326.1"/>
</dbReference>
<dbReference type="UCSC" id="uc031rnc.2">
    <property type="organism name" value="human"/>
</dbReference>
<dbReference type="AGR" id="HGNC:45147"/>
<dbReference type="CTD" id="729974"/>
<dbReference type="GeneCards" id="RFPL4AL1"/>
<dbReference type="HGNC" id="HGNC:45147">
    <property type="gene designation" value="RFPL4AL1"/>
</dbReference>
<dbReference type="HPA" id="ENSG00000229292">
    <property type="expression patterns" value="Not detected"/>
</dbReference>
<dbReference type="neXtProt" id="NX_F8VTS6"/>
<dbReference type="OpenTargets" id="ENSG00000229292"/>
<dbReference type="VEuPathDB" id="HostDB:ENSG00000229292"/>
<dbReference type="eggNOG" id="KOG2177">
    <property type="taxonomic scope" value="Eukaryota"/>
</dbReference>
<dbReference type="GeneTree" id="ENSGT00940000163220"/>
<dbReference type="HOGENOM" id="CLU_013137_7_1_1"/>
<dbReference type="InParanoid" id="F8VTS6"/>
<dbReference type="OMA" id="CHINTFI"/>
<dbReference type="OrthoDB" id="128536at2759"/>
<dbReference type="PAN-GO" id="F8VTS6">
    <property type="GO annotations" value="4 GO annotations based on evolutionary models"/>
</dbReference>
<dbReference type="PhylomeDB" id="F8VTS6"/>
<dbReference type="TreeFam" id="TF317532"/>
<dbReference type="PathwayCommons" id="F8VTS6"/>
<dbReference type="SIGNOR" id="F8VTS6"/>
<dbReference type="BioGRID-ORCS" id="729974">
    <property type="hits" value="23 hits in 1064 CRISPR screens"/>
</dbReference>
<dbReference type="GenomeRNAi" id="729974"/>
<dbReference type="Pharos" id="F8VTS6">
    <property type="development level" value="Tdark"/>
</dbReference>
<dbReference type="PRO" id="PR:F8VTS6"/>
<dbReference type="Proteomes" id="UP000005640">
    <property type="component" value="Chromosome 19"/>
</dbReference>
<dbReference type="RNAct" id="F8VTS6">
    <property type="molecule type" value="protein"/>
</dbReference>
<dbReference type="Bgee" id="ENSG00000229292">
    <property type="expression patterns" value="Expressed in male germ line stem cell (sensu Vertebrata) in testis and 26 other cell types or tissues"/>
</dbReference>
<dbReference type="GO" id="GO:0005737">
    <property type="term" value="C:cytoplasm"/>
    <property type="evidence" value="ECO:0000318"/>
    <property type="project" value="GO_Central"/>
</dbReference>
<dbReference type="GO" id="GO:0061630">
    <property type="term" value="F:ubiquitin protein ligase activity"/>
    <property type="evidence" value="ECO:0000318"/>
    <property type="project" value="GO_Central"/>
</dbReference>
<dbReference type="GO" id="GO:0008270">
    <property type="term" value="F:zinc ion binding"/>
    <property type="evidence" value="ECO:0007669"/>
    <property type="project" value="UniProtKB-KW"/>
</dbReference>
<dbReference type="GO" id="GO:0045087">
    <property type="term" value="P:innate immune response"/>
    <property type="evidence" value="ECO:0000318"/>
    <property type="project" value="GO_Central"/>
</dbReference>
<dbReference type="GO" id="GO:0010468">
    <property type="term" value="P:regulation of gene expression"/>
    <property type="evidence" value="ECO:0000318"/>
    <property type="project" value="GO_Central"/>
</dbReference>
<dbReference type="CDD" id="cd15821">
    <property type="entry name" value="SPRY_PRY_RFPL"/>
    <property type="match status" value="1"/>
</dbReference>
<dbReference type="CDD" id="cd16621">
    <property type="entry name" value="vRING-HC-C4C4_RFPL"/>
    <property type="match status" value="1"/>
</dbReference>
<dbReference type="FunFam" id="2.60.120.920:FF:000040">
    <property type="entry name" value="Ret finger protein-like 4A"/>
    <property type="match status" value="1"/>
</dbReference>
<dbReference type="Gene3D" id="2.60.120.920">
    <property type="match status" value="1"/>
</dbReference>
<dbReference type="Gene3D" id="3.30.40.10">
    <property type="entry name" value="Zinc/RING finger domain, C3HC4 (zinc finger)"/>
    <property type="match status" value="1"/>
</dbReference>
<dbReference type="InterPro" id="IPR001870">
    <property type="entry name" value="B30.2/SPRY"/>
</dbReference>
<dbReference type="InterPro" id="IPR043136">
    <property type="entry name" value="B30.2/SPRY_sf"/>
</dbReference>
<dbReference type="InterPro" id="IPR003879">
    <property type="entry name" value="Butyrophylin_SPRY"/>
</dbReference>
<dbReference type="InterPro" id="IPR013320">
    <property type="entry name" value="ConA-like_dom_sf"/>
</dbReference>
<dbReference type="InterPro" id="IPR006574">
    <property type="entry name" value="PRY"/>
</dbReference>
<dbReference type="InterPro" id="IPR022723">
    <property type="entry name" value="RDM_domain_RFPL"/>
</dbReference>
<dbReference type="InterPro" id="IPR037960">
    <property type="entry name" value="SPRY/PRY_RFPL"/>
</dbReference>
<dbReference type="InterPro" id="IPR003877">
    <property type="entry name" value="SPRY_dom"/>
</dbReference>
<dbReference type="InterPro" id="IPR050143">
    <property type="entry name" value="TRIM/RBCC"/>
</dbReference>
<dbReference type="InterPro" id="IPR001841">
    <property type="entry name" value="Znf_RING"/>
</dbReference>
<dbReference type="InterPro" id="IPR013083">
    <property type="entry name" value="Znf_RING/FYVE/PHD"/>
</dbReference>
<dbReference type="PANTHER" id="PTHR24103">
    <property type="entry name" value="E3 UBIQUITIN-PROTEIN LIGASE TRIM"/>
    <property type="match status" value="1"/>
</dbReference>
<dbReference type="Pfam" id="PF13765">
    <property type="entry name" value="PRY"/>
    <property type="match status" value="1"/>
</dbReference>
<dbReference type="Pfam" id="PF11002">
    <property type="entry name" value="RDM"/>
    <property type="match status" value="1"/>
</dbReference>
<dbReference type="Pfam" id="PF00622">
    <property type="entry name" value="SPRY"/>
    <property type="match status" value="1"/>
</dbReference>
<dbReference type="Pfam" id="PF15227">
    <property type="entry name" value="zf-C3HC4_4"/>
    <property type="match status" value="1"/>
</dbReference>
<dbReference type="PRINTS" id="PR01407">
    <property type="entry name" value="BUTYPHLNCDUF"/>
</dbReference>
<dbReference type="SMART" id="SM00589">
    <property type="entry name" value="PRY"/>
    <property type="match status" value="1"/>
</dbReference>
<dbReference type="SMART" id="SM00449">
    <property type="entry name" value="SPRY"/>
    <property type="match status" value="1"/>
</dbReference>
<dbReference type="SUPFAM" id="SSF49899">
    <property type="entry name" value="Concanavalin A-like lectins/glucanases"/>
    <property type="match status" value="1"/>
</dbReference>
<dbReference type="SUPFAM" id="SSF57850">
    <property type="entry name" value="RING/U-box"/>
    <property type="match status" value="1"/>
</dbReference>
<dbReference type="PROSITE" id="PS50188">
    <property type="entry name" value="B302_SPRY"/>
    <property type="match status" value="1"/>
</dbReference>
<dbReference type="PROSITE" id="PS50089">
    <property type="entry name" value="ZF_RING_2"/>
    <property type="match status" value="1"/>
</dbReference>
<reference key="1">
    <citation type="journal article" date="2004" name="Nature">
        <title>The DNA sequence and biology of human chromosome 19.</title>
        <authorList>
            <person name="Grimwood J."/>
            <person name="Gordon L.A."/>
            <person name="Olsen A.S."/>
            <person name="Terry A."/>
            <person name="Schmutz J."/>
            <person name="Lamerdin J.E."/>
            <person name="Hellsten U."/>
            <person name="Goodstein D."/>
            <person name="Couronne O."/>
            <person name="Tran-Gyamfi M."/>
            <person name="Aerts A."/>
            <person name="Altherr M."/>
            <person name="Ashworth L."/>
            <person name="Bajorek E."/>
            <person name="Black S."/>
            <person name="Branscomb E."/>
            <person name="Caenepeel S."/>
            <person name="Carrano A.V."/>
            <person name="Caoile C."/>
            <person name="Chan Y.M."/>
            <person name="Christensen M."/>
            <person name="Cleland C.A."/>
            <person name="Copeland A."/>
            <person name="Dalin E."/>
            <person name="Dehal P."/>
            <person name="Denys M."/>
            <person name="Detter J.C."/>
            <person name="Escobar J."/>
            <person name="Flowers D."/>
            <person name="Fotopulos D."/>
            <person name="Garcia C."/>
            <person name="Georgescu A.M."/>
            <person name="Glavina T."/>
            <person name="Gomez M."/>
            <person name="Gonzales E."/>
            <person name="Groza M."/>
            <person name="Hammon N."/>
            <person name="Hawkins T."/>
            <person name="Haydu L."/>
            <person name="Ho I."/>
            <person name="Huang W."/>
            <person name="Israni S."/>
            <person name="Jett J."/>
            <person name="Kadner K."/>
            <person name="Kimball H."/>
            <person name="Kobayashi A."/>
            <person name="Larionov V."/>
            <person name="Leem S.-H."/>
            <person name="Lopez F."/>
            <person name="Lou Y."/>
            <person name="Lowry S."/>
            <person name="Malfatti S."/>
            <person name="Martinez D."/>
            <person name="McCready P.M."/>
            <person name="Medina C."/>
            <person name="Morgan J."/>
            <person name="Nelson K."/>
            <person name="Nolan M."/>
            <person name="Ovcharenko I."/>
            <person name="Pitluck S."/>
            <person name="Pollard M."/>
            <person name="Popkie A.P."/>
            <person name="Predki P."/>
            <person name="Quan G."/>
            <person name="Ramirez L."/>
            <person name="Rash S."/>
            <person name="Retterer J."/>
            <person name="Rodriguez A."/>
            <person name="Rogers S."/>
            <person name="Salamov A."/>
            <person name="Salazar A."/>
            <person name="She X."/>
            <person name="Smith D."/>
            <person name="Slezak T."/>
            <person name="Solovyev V."/>
            <person name="Thayer N."/>
            <person name="Tice H."/>
            <person name="Tsai M."/>
            <person name="Ustaszewska A."/>
            <person name="Vo N."/>
            <person name="Wagner M."/>
            <person name="Wheeler J."/>
            <person name="Wu K."/>
            <person name="Xie G."/>
            <person name="Yang J."/>
            <person name="Dubchak I."/>
            <person name="Furey T.S."/>
            <person name="DeJong P."/>
            <person name="Dickson M."/>
            <person name="Gordon D."/>
            <person name="Eichler E.E."/>
            <person name="Pennacchio L.A."/>
            <person name="Richardson P."/>
            <person name="Stubbs L."/>
            <person name="Rokhsar D.S."/>
            <person name="Myers R.M."/>
            <person name="Rubin E.M."/>
            <person name="Lucas S.M."/>
        </authorList>
    </citation>
    <scope>NUCLEOTIDE SEQUENCE [LARGE SCALE GENOMIC DNA]</scope>
</reference>
<reference key="2">
    <citation type="journal article" date="2004" name="Genome Res.">
        <title>The status, quality, and expansion of the NIH full-length cDNA project: the Mammalian Gene Collection (MGC).</title>
        <authorList>
            <consortium name="The MGC Project Team"/>
        </authorList>
    </citation>
    <scope>NUCLEOTIDE SEQUENCE [LARGE SCALE MRNA] OF 1-256</scope>
</reference>
<gene>
    <name type="primary">RFPL4AL1</name>
</gene>
<evidence type="ECO:0000255" key="1">
    <source>
        <dbReference type="PROSITE-ProRule" id="PRU00175"/>
    </source>
</evidence>
<evidence type="ECO:0000255" key="2">
    <source>
        <dbReference type="PROSITE-ProRule" id="PRU00548"/>
    </source>
</evidence>
<evidence type="ECO:0000305" key="3"/>
<sequence>MAEHFKQIIRCPVCLKDLEEAVQLKCGYACCLQCLNSLQKEPDGEGLLCRFCSVVSQKDDIKPKYKLRALVSIIKELEPKLKSVLTMNPRMRKFQVDMTFDVDTANNYLIISEDLRSFRSGDLSQNRKEQAERFDTALCVLGTPRFTSGRHYWEVDVGTSQVWDVGVCKESVNRQGKIELSSEHGFLTVGCREGKVFAASTVPMTPLWVSPQLHRVGIFLDVGMRSIAFYNVSDGCHINTFIEIPVCEPWRPFFAHKRGSQDDQSILSICSVINPSTASAPVSSEGK</sequence>